<gene>
    <name type="primary">ALG10</name>
    <name type="ORF">MGG_03990</name>
</gene>
<organism>
    <name type="scientific">Pyricularia oryzae (strain 70-15 / ATCC MYA-4617 / FGSC 8958)</name>
    <name type="common">Rice blast fungus</name>
    <name type="synonym">Magnaporthe oryzae</name>
    <dbReference type="NCBI Taxonomy" id="242507"/>
    <lineage>
        <taxon>Eukaryota</taxon>
        <taxon>Fungi</taxon>
        <taxon>Dikarya</taxon>
        <taxon>Ascomycota</taxon>
        <taxon>Pezizomycotina</taxon>
        <taxon>Sordariomycetes</taxon>
        <taxon>Sordariomycetidae</taxon>
        <taxon>Magnaporthales</taxon>
        <taxon>Pyriculariaceae</taxon>
        <taxon>Pyricularia</taxon>
    </lineage>
</organism>
<feature type="chain" id="PRO_0000215458" description="Dol-P-Glc:Glc(2)Man(9)GlcNAc(2)-PP-Dol alpha-1,2-glucosyltransferase">
    <location>
        <begin position="1"/>
        <end position="660"/>
    </location>
</feature>
<feature type="transmembrane region" description="Helical" evidence="2">
    <location>
        <begin position="6"/>
        <end position="26"/>
    </location>
</feature>
<feature type="transmembrane region" description="Helical" evidence="2">
    <location>
        <begin position="44"/>
        <end position="64"/>
    </location>
</feature>
<feature type="transmembrane region" description="Helical" evidence="2">
    <location>
        <begin position="135"/>
        <end position="155"/>
    </location>
</feature>
<feature type="transmembrane region" description="Helical" evidence="2">
    <location>
        <begin position="185"/>
        <end position="205"/>
    </location>
</feature>
<feature type="transmembrane region" description="Helical" evidence="2">
    <location>
        <begin position="235"/>
        <end position="255"/>
    </location>
</feature>
<feature type="transmembrane region" description="Helical" evidence="2">
    <location>
        <begin position="305"/>
        <end position="325"/>
    </location>
</feature>
<feature type="transmembrane region" description="Helical" evidence="2">
    <location>
        <begin position="338"/>
        <end position="358"/>
    </location>
</feature>
<feature type="transmembrane region" description="Helical" evidence="2">
    <location>
        <begin position="367"/>
        <end position="387"/>
    </location>
</feature>
<feature type="transmembrane region" description="Helical" evidence="2">
    <location>
        <begin position="434"/>
        <end position="454"/>
    </location>
</feature>
<feature type="transmembrane region" description="Helical" evidence="2">
    <location>
        <begin position="488"/>
        <end position="508"/>
    </location>
</feature>
<feature type="transmembrane region" description="Helical" evidence="2">
    <location>
        <begin position="551"/>
        <end position="571"/>
    </location>
</feature>
<feature type="transmembrane region" description="Helical" evidence="2">
    <location>
        <begin position="617"/>
        <end position="637"/>
    </location>
</feature>
<feature type="region of interest" description="Disordered" evidence="3">
    <location>
        <begin position="526"/>
        <end position="547"/>
    </location>
</feature>
<feature type="compositionally biased region" description="Basic and acidic residues" evidence="3">
    <location>
        <begin position="534"/>
        <end position="546"/>
    </location>
</feature>
<proteinExistence type="inferred from homology"/>
<keyword id="KW-0256">Endoplasmic reticulum</keyword>
<keyword id="KW-0328">Glycosyltransferase</keyword>
<keyword id="KW-0472">Membrane</keyword>
<keyword id="KW-1185">Reference proteome</keyword>
<keyword id="KW-0808">Transferase</keyword>
<keyword id="KW-0812">Transmembrane</keyword>
<keyword id="KW-1133">Transmembrane helix</keyword>
<name>ALG10_PYRO7</name>
<evidence type="ECO:0000250" key="1">
    <source>
        <dbReference type="UniProtKB" id="P50076"/>
    </source>
</evidence>
<evidence type="ECO:0000255" key="2"/>
<evidence type="ECO:0000256" key="3">
    <source>
        <dbReference type="SAM" id="MobiDB-lite"/>
    </source>
</evidence>
<evidence type="ECO:0000305" key="4"/>
<reference key="1">
    <citation type="journal article" date="2005" name="Nature">
        <title>The genome sequence of the rice blast fungus Magnaporthe grisea.</title>
        <authorList>
            <person name="Dean R.A."/>
            <person name="Talbot N.J."/>
            <person name="Ebbole D.J."/>
            <person name="Farman M.L."/>
            <person name="Mitchell T.K."/>
            <person name="Orbach M.J."/>
            <person name="Thon M.R."/>
            <person name="Kulkarni R."/>
            <person name="Xu J.-R."/>
            <person name="Pan H."/>
            <person name="Read N.D."/>
            <person name="Lee Y.-H."/>
            <person name="Carbone I."/>
            <person name="Brown D."/>
            <person name="Oh Y.Y."/>
            <person name="Donofrio N."/>
            <person name="Jeong J.S."/>
            <person name="Soanes D.M."/>
            <person name="Djonovic S."/>
            <person name="Kolomiets E."/>
            <person name="Rehmeyer C."/>
            <person name="Li W."/>
            <person name="Harding M."/>
            <person name="Kim S."/>
            <person name="Lebrun M.-H."/>
            <person name="Bohnert H."/>
            <person name="Coughlan S."/>
            <person name="Butler J."/>
            <person name="Calvo S.E."/>
            <person name="Ma L.-J."/>
            <person name="Nicol R."/>
            <person name="Purcell S."/>
            <person name="Nusbaum C."/>
            <person name="Galagan J.E."/>
            <person name="Birren B.W."/>
        </authorList>
    </citation>
    <scope>NUCLEOTIDE SEQUENCE [LARGE SCALE GENOMIC DNA]</scope>
    <source>
        <strain>70-15 / ATCC MYA-4617 / FGSC 8958</strain>
    </source>
</reference>
<comment type="function">
    <text evidence="1">Dol-P-Glc:Glc(2)Man(9)GlcNAc(2)-PP-Dol alpha-1,2-glucosyltransferase that operates in the biosynthetic pathway of dolichol-linked oligosaccharides, the glycan precursors employed in protein asparagine (N)-glycosylation. The assembly of dolichol-linked oligosaccharides begins on the cytosolic side of the endoplasmic reticulum membrane and finishes in its lumen. The sequential addition of sugars to dolichol pyrophosphate produces dolichol-linked oligosaccharides containing fourteen sugars, including two GlcNAcs, nine mannoses and three glucoses. Once assembled, the oligosaccharide is transferred from the lipid to nascent proteins by oligosaccharyltransferases. In the lumen of the endoplasmic reticulum, adds the third and last glucose residue from dolichyl phosphate glucose (Dol-P-Glc) onto the lipid-linked oligosaccharide intermediate Glc(2)Man(9)GlcNAc(2)-PP-Dol to produce Glc(3)Man(9)GlcNAc(2)-PP-Dol.</text>
</comment>
<comment type="catalytic activity">
    <reaction evidence="1">
        <text>an alpha-D-Glc-(1-&gt;3)-alpha-D-Glc-(1-&gt;3)-alpha-D-Man-(1-&gt;2)-alpha-D-Man-(1-&gt;2)-alpha-D-Man-(1-&gt;3)-[alpha-D-Man-(1-&gt;2)-alpha-D-Man-(1-&gt;3)-[alpha-D-Man-(1-&gt;2)-alpha-D-Man-(1-&gt;6)]-alpha-D-Man-(1-&gt;6)]-beta-D-Man-(1-&gt;4)-beta-D-GlcNAc-(1-&gt;4)-alpha-D-GlcNAc-diphospho-di-trans,poly-cis-dolichol + a di-trans,poly-cis-dolichyl beta-D-glucosyl phosphate = a alpha-D-Glc-(1-&gt;2)-alpha-D-Glc-(1-&gt;3)-alpha-D-Glc-(1-&gt;3)-alpha-D-Man-(1-&gt;2)-alpha-D-Man-(1-&gt;2)-alpha-D-Man-(1-&gt;3)-[alpha-D-Man-(1-&gt;2)-alpha-D-Man-(1-&gt;3)-[alpha-D-Man-(1-&gt;2)-alpha-D-Man-(1-&gt;6)]-alpha-D-Man-(1-&gt;6)]-beta-D-Man-(1-&gt;4)-beta-D-GlcNAc-(1-&gt;4)-alpha-D-GlcNAc-diphospho-di-trans,poly-cis-dolichol + a di-trans,poly-cis-dolichyl phosphate + H(+)</text>
        <dbReference type="Rhea" id="RHEA:29543"/>
        <dbReference type="Rhea" id="RHEA-COMP:19498"/>
        <dbReference type="Rhea" id="RHEA-COMP:19502"/>
        <dbReference type="Rhea" id="RHEA-COMP:19512"/>
        <dbReference type="Rhea" id="RHEA-COMP:19522"/>
        <dbReference type="ChEBI" id="CHEBI:15378"/>
        <dbReference type="ChEBI" id="CHEBI:57525"/>
        <dbReference type="ChEBI" id="CHEBI:57683"/>
        <dbReference type="ChEBI" id="CHEBI:132522"/>
        <dbReference type="ChEBI" id="CHEBI:132523"/>
        <dbReference type="EC" id="2.4.1.256"/>
    </reaction>
    <physiologicalReaction direction="left-to-right" evidence="1">
        <dbReference type="Rhea" id="RHEA:29544"/>
    </physiologicalReaction>
</comment>
<comment type="pathway">
    <text evidence="1">Protein modification; protein glycosylation.</text>
</comment>
<comment type="subcellular location">
    <subcellularLocation>
        <location evidence="1">Endoplasmic reticulum membrane</location>
        <topology evidence="2">Multi-pass membrane protein</topology>
    </subcellularLocation>
</comment>
<comment type="similarity">
    <text evidence="4">Belongs to the ALG10 glucosyltransferase family.</text>
</comment>
<dbReference type="EC" id="2.4.1.256" evidence="1"/>
<dbReference type="EMBL" id="CM001236">
    <property type="protein sequence ID" value="EHA47496.1"/>
    <property type="molecule type" value="Genomic_DNA"/>
</dbReference>
<dbReference type="RefSeq" id="XP_003719863.1">
    <property type="nucleotide sequence ID" value="XM_003719815.1"/>
</dbReference>
<dbReference type="FunCoup" id="P0C147">
    <property type="interactions" value="666"/>
</dbReference>
<dbReference type="STRING" id="242507.P0C147"/>
<dbReference type="EnsemblFungi" id="MGG_03990T0">
    <property type="protein sequence ID" value="MGG_03990T0"/>
    <property type="gene ID" value="MGG_03990"/>
</dbReference>
<dbReference type="GeneID" id="2677363"/>
<dbReference type="KEGG" id="mgr:MGG_03990"/>
<dbReference type="VEuPathDB" id="FungiDB:MGG_03990"/>
<dbReference type="eggNOG" id="KOG2642">
    <property type="taxonomic scope" value="Eukaryota"/>
</dbReference>
<dbReference type="HOGENOM" id="CLU_017053_0_0_1"/>
<dbReference type="InParanoid" id="P0C147"/>
<dbReference type="OMA" id="VWDSKIT"/>
<dbReference type="OrthoDB" id="4769at2759"/>
<dbReference type="UniPathway" id="UPA00378"/>
<dbReference type="Proteomes" id="UP000009058">
    <property type="component" value="Chromosome 6"/>
</dbReference>
<dbReference type="GO" id="GO:0005789">
    <property type="term" value="C:endoplasmic reticulum membrane"/>
    <property type="evidence" value="ECO:0007669"/>
    <property type="project" value="UniProtKB-SubCell"/>
</dbReference>
<dbReference type="GO" id="GO:0106073">
    <property type="term" value="F:dolichyl pyrophosphate Glc2Man9GlcNAc2 alpha-1,2-glucosyltransferase activity"/>
    <property type="evidence" value="ECO:0007669"/>
    <property type="project" value="UniProtKB-EC"/>
</dbReference>
<dbReference type="GO" id="GO:0006488">
    <property type="term" value="P:dolichol-linked oligosaccharide biosynthetic process"/>
    <property type="evidence" value="ECO:0007669"/>
    <property type="project" value="InterPro"/>
</dbReference>
<dbReference type="InterPro" id="IPR016900">
    <property type="entry name" value="Alg10"/>
</dbReference>
<dbReference type="PANTHER" id="PTHR12989">
    <property type="entry name" value="ALPHA-1,2-GLUCOSYLTRANSFERASE ALG10"/>
    <property type="match status" value="1"/>
</dbReference>
<dbReference type="PANTHER" id="PTHR12989:SF10">
    <property type="entry name" value="DOL-P-GLC:GLC(2)MAN(9)GLCNAC(2)-PP-DOL ALPHA-1,2-GLUCOSYLTRANSFERASE-RELATED"/>
    <property type="match status" value="1"/>
</dbReference>
<dbReference type="Pfam" id="PF04922">
    <property type="entry name" value="DIE2_ALG10"/>
    <property type="match status" value="1"/>
</dbReference>
<protein>
    <recommendedName>
        <fullName evidence="1">Dol-P-Glc:Glc(2)Man(9)GlcNAc(2)-PP-Dol alpha-1,2-glucosyltransferase</fullName>
        <ecNumber evidence="1">2.4.1.256</ecNumber>
    </recommendedName>
    <alternativeName>
        <fullName>Alpha-1,2-glucosyltransferase ALG10-A</fullName>
    </alternativeName>
    <alternativeName>
        <fullName>Alpha-2-glucosyltransferase ALG10</fullName>
    </alternativeName>
    <alternativeName>
        <fullName>Asparagine-linked glycosylation protein 10</fullName>
    </alternativeName>
    <alternativeName>
        <fullName>Dolichyl-phosphoglucose-dependent glucosyltransferase ALG10</fullName>
    </alternativeName>
</protein>
<accession>P0C147</accession>
<accession>A4R4R2</accession>
<accession>G4NGY6</accession>
<sequence length="660" mass="74905">MGLFEMLPVSRLVHILVIYAASFAITDVMEDSFIQSRRLLLNRFIYRTGLFLVIIAACIWLAIVNTKVPEPYLDEVFHIPQAEKYLQGRWVEWDDKITTPPGLYLVSYVLVKARTWLSASAAAVNPRYSQDGVTAASLLRESNVYAVMAIAALVLRCRRFIETRHAPTNAKGPHFDSMYSIHTTVNITLFPVIFFFSGLYYTDLWSTATVLWAYENHLKRLTEQTTFWNDINTVILGVTALFMRQTNVFWVVVYFGGLESIHAIKKGAGSSSSKAVKAANIRDLAHALETYWALYAAGNIHDPPLSAASTYDVVWLVLSVAIAAVHNLPRVLRQVWPHISILGLFAGFVAWNGGVVLGDKSNHVATLHLAQMLYIWPLIAFFSAPLMLRCLVSTALYLRKLLQGHSAQPQKERSTKSSQKDWTLTCIGFIQQHTSSGLPFPLWYVSAAVATVIVHKSTIIHPFTLADNRHYMFYVFRYSILRRPEVRYLLVPFYVVCHRLCWHLLGGSSTQDGQRISFIQAPGVETVSSAPPKDTIKLKEEGRPEDGGESLSTGVLWLSATALSLITAPLVEPRYFIVPWVMWRIMVPAWRVQEPRSGEKGLLTRLRSWTQGLDLRLVLETLWFVAINLGTMYMFICRPYHWKDVDGKLMDEGRLQRFMW</sequence>